<evidence type="ECO:0000255" key="1">
    <source>
        <dbReference type="HAMAP-Rule" id="MF_00508"/>
    </source>
</evidence>
<evidence type="ECO:0000305" key="2"/>
<dbReference type="EMBL" id="AM884176">
    <property type="protein sequence ID" value="CAP04134.1"/>
    <property type="molecule type" value="Genomic_DNA"/>
</dbReference>
<dbReference type="EMBL" id="AF087347">
    <property type="protein sequence ID" value="AAD04120.1"/>
    <property type="molecule type" value="Genomic_DNA"/>
</dbReference>
<dbReference type="RefSeq" id="WP_009871791.1">
    <property type="nucleotide sequence ID" value="NC_010287.1"/>
</dbReference>
<dbReference type="RefSeq" id="YP_001654767.1">
    <property type="nucleotide sequence ID" value="NC_010287.1"/>
</dbReference>
<dbReference type="SMR" id="B0B808"/>
<dbReference type="GeneID" id="93065269"/>
<dbReference type="KEGG" id="ctb:CTL0695"/>
<dbReference type="PATRIC" id="fig|471472.4.peg.747"/>
<dbReference type="HOGENOM" id="CLU_122625_1_3_0"/>
<dbReference type="PRO" id="PR:B0B808"/>
<dbReference type="Proteomes" id="UP001154402">
    <property type="component" value="Chromosome"/>
</dbReference>
<dbReference type="GO" id="GO:1990904">
    <property type="term" value="C:ribonucleoprotein complex"/>
    <property type="evidence" value="ECO:0007669"/>
    <property type="project" value="UniProtKB-KW"/>
</dbReference>
<dbReference type="GO" id="GO:0005840">
    <property type="term" value="C:ribosome"/>
    <property type="evidence" value="ECO:0007669"/>
    <property type="project" value="UniProtKB-KW"/>
</dbReference>
<dbReference type="GO" id="GO:0003735">
    <property type="term" value="F:structural constituent of ribosome"/>
    <property type="evidence" value="ECO:0007669"/>
    <property type="project" value="InterPro"/>
</dbReference>
<dbReference type="GO" id="GO:0000049">
    <property type="term" value="F:tRNA binding"/>
    <property type="evidence" value="ECO:0007669"/>
    <property type="project" value="UniProtKB-UniRule"/>
</dbReference>
<dbReference type="GO" id="GO:0006412">
    <property type="term" value="P:translation"/>
    <property type="evidence" value="ECO:0007669"/>
    <property type="project" value="UniProtKB-UniRule"/>
</dbReference>
<dbReference type="FunFam" id="3.30.70.600:FF:000001">
    <property type="entry name" value="30S ribosomal protein S10"/>
    <property type="match status" value="1"/>
</dbReference>
<dbReference type="Gene3D" id="3.30.70.600">
    <property type="entry name" value="Ribosomal protein S10 domain"/>
    <property type="match status" value="1"/>
</dbReference>
<dbReference type="HAMAP" id="MF_00508">
    <property type="entry name" value="Ribosomal_uS10"/>
    <property type="match status" value="1"/>
</dbReference>
<dbReference type="InterPro" id="IPR001848">
    <property type="entry name" value="Ribosomal_uS10"/>
</dbReference>
<dbReference type="InterPro" id="IPR018268">
    <property type="entry name" value="Ribosomal_uS10_CS"/>
</dbReference>
<dbReference type="InterPro" id="IPR027486">
    <property type="entry name" value="Ribosomal_uS10_dom"/>
</dbReference>
<dbReference type="InterPro" id="IPR036838">
    <property type="entry name" value="Ribosomal_uS10_dom_sf"/>
</dbReference>
<dbReference type="NCBIfam" id="NF001861">
    <property type="entry name" value="PRK00596.1"/>
    <property type="match status" value="1"/>
</dbReference>
<dbReference type="NCBIfam" id="TIGR01049">
    <property type="entry name" value="rpsJ_bact"/>
    <property type="match status" value="1"/>
</dbReference>
<dbReference type="PANTHER" id="PTHR11700">
    <property type="entry name" value="30S RIBOSOMAL PROTEIN S10 FAMILY MEMBER"/>
    <property type="match status" value="1"/>
</dbReference>
<dbReference type="Pfam" id="PF00338">
    <property type="entry name" value="Ribosomal_S10"/>
    <property type="match status" value="1"/>
</dbReference>
<dbReference type="PRINTS" id="PR00971">
    <property type="entry name" value="RIBOSOMALS10"/>
</dbReference>
<dbReference type="SMART" id="SM01403">
    <property type="entry name" value="Ribosomal_S10"/>
    <property type="match status" value="1"/>
</dbReference>
<dbReference type="SUPFAM" id="SSF54999">
    <property type="entry name" value="Ribosomal protein S10"/>
    <property type="match status" value="1"/>
</dbReference>
<dbReference type="PROSITE" id="PS00361">
    <property type="entry name" value="RIBOSOMAL_S10"/>
    <property type="match status" value="1"/>
</dbReference>
<comment type="function">
    <text evidence="1">Involved in the binding of tRNA to the ribosomes.</text>
</comment>
<comment type="subunit">
    <text evidence="1">Part of the 30S ribosomal subunit.</text>
</comment>
<comment type="similarity">
    <text evidence="1">Belongs to the universal ribosomal protein uS10 family.</text>
</comment>
<gene>
    <name evidence="1" type="primary">rpsJ</name>
    <name type="ordered locus">CTL0695</name>
</gene>
<organism>
    <name type="scientific">Chlamydia trachomatis serovar L2 (strain ATCC VR-902B / DSM 19102 / 434/Bu)</name>
    <dbReference type="NCBI Taxonomy" id="471472"/>
    <lineage>
        <taxon>Bacteria</taxon>
        <taxon>Pseudomonadati</taxon>
        <taxon>Chlamydiota</taxon>
        <taxon>Chlamydiia</taxon>
        <taxon>Chlamydiales</taxon>
        <taxon>Chlamydiaceae</taxon>
        <taxon>Chlamydia/Chlamydophila group</taxon>
        <taxon>Chlamydia</taxon>
    </lineage>
</organism>
<proteinExistence type="inferred from homology"/>
<reference key="1">
    <citation type="journal article" date="2008" name="Genome Res.">
        <title>Chlamydia trachomatis: genome sequence analysis of lymphogranuloma venereum isolates.</title>
        <authorList>
            <person name="Thomson N.R."/>
            <person name="Holden M.T.G."/>
            <person name="Carder C."/>
            <person name="Lennard N."/>
            <person name="Lockey S.J."/>
            <person name="Marsh P."/>
            <person name="Skipp P."/>
            <person name="O'Connor C.D."/>
            <person name="Goodhead I."/>
            <person name="Norbertzcak H."/>
            <person name="Harris B."/>
            <person name="Ormond D."/>
            <person name="Rance R."/>
            <person name="Quail M.A."/>
            <person name="Parkhill J."/>
            <person name="Stephens R.S."/>
            <person name="Clarke I.N."/>
        </authorList>
    </citation>
    <scope>NUCLEOTIDE SEQUENCE [LARGE SCALE GENOMIC DNA]</scope>
    <source>
        <strain>ATCC VR-902B / DSM 19102 / 434/Bu</strain>
    </source>
</reference>
<reference key="2">
    <citation type="submission" date="1998-08" db="EMBL/GenBank/DDBJ databases">
        <title>Gene identification of Chlamydia trachomatis by random DNA sequencing.</title>
        <authorList>
            <person name="Wang L."/>
            <person name="Steenburg S.D."/>
            <person name="Zheng Y."/>
            <person name="Larsen S.H."/>
        </authorList>
    </citation>
    <scope>NUCLEOTIDE SEQUENCE [GENOMIC DNA] OF 8-80</scope>
</reference>
<keyword id="KW-0687">Ribonucleoprotein</keyword>
<keyword id="KW-0689">Ribosomal protein</keyword>
<name>RS10_CHLT2</name>
<protein>
    <recommendedName>
        <fullName evidence="1">Small ribosomal subunit protein uS10</fullName>
    </recommendedName>
    <alternativeName>
        <fullName evidence="2">30S ribosomal protein S10</fullName>
    </alternativeName>
</protein>
<sequence length="105" mass="11869">MKQQKQRIRIRLKGFDQGQLDQSTANIVETAKRTGARVVGPIPLPTKREVYTVLRSPHVDKKSREQFEIRTHKRLIDILDPTGKTIDALKMLSLPAGVDIKIKAA</sequence>
<feature type="chain" id="PRO_1000127100" description="Small ribosomal subunit protein uS10">
    <location>
        <begin position="1"/>
        <end position="105"/>
    </location>
</feature>
<feature type="sequence conflict" description="In Ref. 2; AAD04120." evidence="2" ref="2">
    <original>RTHKRLIDILD</original>
    <variation>LEGKEEVIRKI</variation>
    <location>
        <begin position="70"/>
        <end position="80"/>
    </location>
</feature>
<accession>B0B808</accession>
<accession>O84443</accession>
<accession>P0A4A1</accession>
<accession>Q9ZG26</accession>